<feature type="chain" id="PRO_1000078499" description="Lysine--tRNA ligase">
    <location>
        <begin position="1"/>
        <end position="498"/>
    </location>
</feature>
<feature type="binding site" evidence="1">
    <location>
        <position position="409"/>
    </location>
    <ligand>
        <name>Mg(2+)</name>
        <dbReference type="ChEBI" id="CHEBI:18420"/>
        <label>1</label>
    </ligand>
</feature>
<feature type="binding site" evidence="1">
    <location>
        <position position="416"/>
    </location>
    <ligand>
        <name>Mg(2+)</name>
        <dbReference type="ChEBI" id="CHEBI:18420"/>
        <label>1</label>
    </ligand>
</feature>
<feature type="binding site" evidence="1">
    <location>
        <position position="416"/>
    </location>
    <ligand>
        <name>Mg(2+)</name>
        <dbReference type="ChEBI" id="CHEBI:18420"/>
        <label>2</label>
    </ligand>
</feature>
<proteinExistence type="inferred from homology"/>
<dbReference type="EC" id="6.1.1.6" evidence="1"/>
<dbReference type="EMBL" id="CP000890">
    <property type="protein sequence ID" value="ABX77971.1"/>
    <property type="molecule type" value="Genomic_DNA"/>
</dbReference>
<dbReference type="RefSeq" id="WP_005771651.1">
    <property type="nucleotide sequence ID" value="NC_010117.1"/>
</dbReference>
<dbReference type="SMR" id="A9NBP7"/>
<dbReference type="KEGG" id="cbs:COXBURSA331_A0538"/>
<dbReference type="HOGENOM" id="CLU_008255_6_0_6"/>
<dbReference type="GO" id="GO:0005829">
    <property type="term" value="C:cytosol"/>
    <property type="evidence" value="ECO:0007669"/>
    <property type="project" value="TreeGrafter"/>
</dbReference>
<dbReference type="GO" id="GO:0005524">
    <property type="term" value="F:ATP binding"/>
    <property type="evidence" value="ECO:0007669"/>
    <property type="project" value="UniProtKB-UniRule"/>
</dbReference>
<dbReference type="GO" id="GO:0004824">
    <property type="term" value="F:lysine-tRNA ligase activity"/>
    <property type="evidence" value="ECO:0007669"/>
    <property type="project" value="UniProtKB-UniRule"/>
</dbReference>
<dbReference type="GO" id="GO:0000287">
    <property type="term" value="F:magnesium ion binding"/>
    <property type="evidence" value="ECO:0007669"/>
    <property type="project" value="UniProtKB-UniRule"/>
</dbReference>
<dbReference type="GO" id="GO:0000049">
    <property type="term" value="F:tRNA binding"/>
    <property type="evidence" value="ECO:0007669"/>
    <property type="project" value="TreeGrafter"/>
</dbReference>
<dbReference type="GO" id="GO:0006430">
    <property type="term" value="P:lysyl-tRNA aminoacylation"/>
    <property type="evidence" value="ECO:0007669"/>
    <property type="project" value="UniProtKB-UniRule"/>
</dbReference>
<dbReference type="CDD" id="cd00775">
    <property type="entry name" value="LysRS_core"/>
    <property type="match status" value="1"/>
</dbReference>
<dbReference type="CDD" id="cd04322">
    <property type="entry name" value="LysRS_N"/>
    <property type="match status" value="1"/>
</dbReference>
<dbReference type="FunFam" id="2.40.50.140:FF:000024">
    <property type="entry name" value="Lysine--tRNA ligase"/>
    <property type="match status" value="1"/>
</dbReference>
<dbReference type="FunFam" id="3.30.930.10:FF:000001">
    <property type="entry name" value="Lysine--tRNA ligase"/>
    <property type="match status" value="1"/>
</dbReference>
<dbReference type="Gene3D" id="3.30.930.10">
    <property type="entry name" value="Bira Bifunctional Protein, Domain 2"/>
    <property type="match status" value="1"/>
</dbReference>
<dbReference type="Gene3D" id="2.40.50.140">
    <property type="entry name" value="Nucleic acid-binding proteins"/>
    <property type="match status" value="1"/>
</dbReference>
<dbReference type="HAMAP" id="MF_00252">
    <property type="entry name" value="Lys_tRNA_synth_class2"/>
    <property type="match status" value="1"/>
</dbReference>
<dbReference type="InterPro" id="IPR004364">
    <property type="entry name" value="Aa-tRNA-synt_II"/>
</dbReference>
<dbReference type="InterPro" id="IPR006195">
    <property type="entry name" value="aa-tRNA-synth_II"/>
</dbReference>
<dbReference type="InterPro" id="IPR045864">
    <property type="entry name" value="aa-tRNA-synth_II/BPL/LPL"/>
</dbReference>
<dbReference type="InterPro" id="IPR002313">
    <property type="entry name" value="Lys-tRNA-ligase_II"/>
</dbReference>
<dbReference type="InterPro" id="IPR044136">
    <property type="entry name" value="Lys-tRNA-ligase_II_N"/>
</dbReference>
<dbReference type="InterPro" id="IPR018149">
    <property type="entry name" value="Lys-tRNA-synth_II_C"/>
</dbReference>
<dbReference type="InterPro" id="IPR012340">
    <property type="entry name" value="NA-bd_OB-fold"/>
</dbReference>
<dbReference type="InterPro" id="IPR004365">
    <property type="entry name" value="NA-bd_OB_tRNA"/>
</dbReference>
<dbReference type="NCBIfam" id="TIGR00499">
    <property type="entry name" value="lysS_bact"/>
    <property type="match status" value="1"/>
</dbReference>
<dbReference type="NCBIfam" id="NF001756">
    <property type="entry name" value="PRK00484.1"/>
    <property type="match status" value="1"/>
</dbReference>
<dbReference type="PANTHER" id="PTHR42918:SF15">
    <property type="entry name" value="LYSINE--TRNA LIGASE, CHLOROPLASTIC_MITOCHONDRIAL"/>
    <property type="match status" value="1"/>
</dbReference>
<dbReference type="PANTHER" id="PTHR42918">
    <property type="entry name" value="LYSYL-TRNA SYNTHETASE"/>
    <property type="match status" value="1"/>
</dbReference>
<dbReference type="Pfam" id="PF00152">
    <property type="entry name" value="tRNA-synt_2"/>
    <property type="match status" value="1"/>
</dbReference>
<dbReference type="Pfam" id="PF01336">
    <property type="entry name" value="tRNA_anti-codon"/>
    <property type="match status" value="1"/>
</dbReference>
<dbReference type="PRINTS" id="PR00982">
    <property type="entry name" value="TRNASYNTHLYS"/>
</dbReference>
<dbReference type="SUPFAM" id="SSF55681">
    <property type="entry name" value="Class II aaRS and biotin synthetases"/>
    <property type="match status" value="1"/>
</dbReference>
<dbReference type="SUPFAM" id="SSF50249">
    <property type="entry name" value="Nucleic acid-binding proteins"/>
    <property type="match status" value="1"/>
</dbReference>
<dbReference type="PROSITE" id="PS50862">
    <property type="entry name" value="AA_TRNA_LIGASE_II"/>
    <property type="match status" value="1"/>
</dbReference>
<reference key="1">
    <citation type="submission" date="2007-11" db="EMBL/GenBank/DDBJ databases">
        <title>Genome sequencing of phylogenetically and phenotypically diverse Coxiella burnetii isolates.</title>
        <authorList>
            <person name="Seshadri R."/>
            <person name="Samuel J.E."/>
        </authorList>
    </citation>
    <scope>NUCLEOTIDE SEQUENCE [LARGE SCALE GENOMIC DNA]</scope>
    <source>
        <strain>RSA 331 / Henzerling II</strain>
    </source>
</reference>
<evidence type="ECO:0000255" key="1">
    <source>
        <dbReference type="HAMAP-Rule" id="MF_00252"/>
    </source>
</evidence>
<sequence length="498" mass="57739">MELKDQIKEENEQIAQRKLKLKKRREEGQAYPNDFKRDSLAADLHAVYDQFDSGALTAKAIRVKMAGRMMTRRIMGKASFAHIQDMKGRMQIYVTRDSLPQGVYSDFKSWDLGDIVGIEGELFKTKTEELSVKVDQIRLLTKALRPMPDKFHGLHDQEQRFRQRYLDLIVNESSRHLFQTRSQVIAQIRRFLDDRGYIEVETPMMHPLPGGAAARPFETHHNAMNMDLFLRIAPELYLKRLVVGGFEKVYEINRNFRNEGISTRHNPEFTMLEFYQAYATYEDMMMLTESMIRHLAEKIFGVMEIKYQGVRIDLNKPFPRLSLRDAILQFNPGITPDQIDHLETARELAHKYEIATPAHYGLGKIQTELFEKLVEEKLQQPIFITHFPKEVSPLSRANEENDFITDRFEFYVGGREIANGFSELNDPEDQAARFREQLKARNAGDLEAMSFDEDYITALEYGLPPTAGEGIGIDRLVMLFTDNASIRDVILFPLLRSK</sequence>
<protein>
    <recommendedName>
        <fullName evidence="1">Lysine--tRNA ligase</fullName>
        <ecNumber evidence="1">6.1.1.6</ecNumber>
    </recommendedName>
    <alternativeName>
        <fullName evidence="1">Lysyl-tRNA synthetase</fullName>
        <shortName evidence="1">LysRS</shortName>
    </alternativeName>
</protein>
<keyword id="KW-0030">Aminoacyl-tRNA synthetase</keyword>
<keyword id="KW-0067">ATP-binding</keyword>
<keyword id="KW-0963">Cytoplasm</keyword>
<keyword id="KW-0436">Ligase</keyword>
<keyword id="KW-0460">Magnesium</keyword>
<keyword id="KW-0479">Metal-binding</keyword>
<keyword id="KW-0547">Nucleotide-binding</keyword>
<keyword id="KW-0648">Protein biosynthesis</keyword>
<accession>A9NBP7</accession>
<name>SYK_COXBR</name>
<gene>
    <name evidence="1" type="primary">lysS</name>
    <name type="ordered locus">COXBURSA331_A0538</name>
</gene>
<organism>
    <name type="scientific">Coxiella burnetii (strain RSA 331 / Henzerling II)</name>
    <dbReference type="NCBI Taxonomy" id="360115"/>
    <lineage>
        <taxon>Bacteria</taxon>
        <taxon>Pseudomonadati</taxon>
        <taxon>Pseudomonadota</taxon>
        <taxon>Gammaproteobacteria</taxon>
        <taxon>Legionellales</taxon>
        <taxon>Coxiellaceae</taxon>
        <taxon>Coxiella</taxon>
    </lineage>
</organism>
<comment type="catalytic activity">
    <reaction evidence="1">
        <text>tRNA(Lys) + L-lysine + ATP = L-lysyl-tRNA(Lys) + AMP + diphosphate</text>
        <dbReference type="Rhea" id="RHEA:20792"/>
        <dbReference type="Rhea" id="RHEA-COMP:9696"/>
        <dbReference type="Rhea" id="RHEA-COMP:9697"/>
        <dbReference type="ChEBI" id="CHEBI:30616"/>
        <dbReference type="ChEBI" id="CHEBI:32551"/>
        <dbReference type="ChEBI" id="CHEBI:33019"/>
        <dbReference type="ChEBI" id="CHEBI:78442"/>
        <dbReference type="ChEBI" id="CHEBI:78529"/>
        <dbReference type="ChEBI" id="CHEBI:456215"/>
        <dbReference type="EC" id="6.1.1.6"/>
    </reaction>
</comment>
<comment type="cofactor">
    <cofactor evidence="1">
        <name>Mg(2+)</name>
        <dbReference type="ChEBI" id="CHEBI:18420"/>
    </cofactor>
    <text evidence="1">Binds 3 Mg(2+) ions per subunit.</text>
</comment>
<comment type="subunit">
    <text evidence="1">Homodimer.</text>
</comment>
<comment type="subcellular location">
    <subcellularLocation>
        <location evidence="1">Cytoplasm</location>
    </subcellularLocation>
</comment>
<comment type="similarity">
    <text evidence="1">Belongs to the class-II aminoacyl-tRNA synthetase family.</text>
</comment>